<reference key="1">
    <citation type="journal article" date="2004" name="Gene">
        <title>Analysis of the mitochondrial genome of cheetahs (Acinonyx jubatus) with neurodegenerative disease.</title>
        <authorList>
            <person name="Burger P.A."/>
            <person name="Steinborn R."/>
            <person name="Walzer C."/>
            <person name="Petit T."/>
            <person name="Mueller M."/>
            <person name="Schwarzenberger F."/>
        </authorList>
    </citation>
    <scope>NUCLEOTIDE SEQUENCE [GENOMIC DNA]</scope>
    <source>
        <strain>Isolate AJ 4050</strain>
        <strain>Isolate AJ 4237</strain>
        <tissue>Liver</tissue>
    </source>
</reference>
<evidence type="ECO:0000250" key="1"/>
<evidence type="ECO:0000250" key="2">
    <source>
        <dbReference type="UniProtKB" id="P00157"/>
    </source>
</evidence>
<evidence type="ECO:0000255" key="3">
    <source>
        <dbReference type="PROSITE-ProRule" id="PRU00967"/>
    </source>
</evidence>
<evidence type="ECO:0000255" key="4">
    <source>
        <dbReference type="PROSITE-ProRule" id="PRU00968"/>
    </source>
</evidence>
<gene>
    <name type="primary">MT-CYB</name>
    <name type="synonym">COB</name>
    <name type="synonym">CYTB</name>
    <name type="synonym">MTCYB</name>
</gene>
<comment type="function">
    <text evidence="2">Component of the ubiquinol-cytochrome c reductase complex (complex III or cytochrome b-c1 complex) that is part of the mitochondrial respiratory chain. The b-c1 complex mediates electron transfer from ubiquinol to cytochrome c. Contributes to the generation of a proton gradient across the mitochondrial membrane that is then used for ATP synthesis.</text>
</comment>
<comment type="cofactor">
    <cofactor evidence="2">
        <name>heme b</name>
        <dbReference type="ChEBI" id="CHEBI:60344"/>
    </cofactor>
    <text evidence="2">Binds 2 heme b groups non-covalently.</text>
</comment>
<comment type="subunit">
    <text evidence="2">The cytochrome bc1 complex contains 11 subunits: 3 respiratory subunits (MT-CYB, CYC1 and UQCRFS1), 2 core proteins (UQCRC1 and UQCRC2) and 6 low-molecular weight proteins (UQCRH/QCR6, UQCRB/QCR7, UQCRQ/QCR8, UQCR10/QCR9, UQCR11/QCR10 and a cleavage product of UQCRFS1). This cytochrome bc1 complex then forms a dimer.</text>
</comment>
<comment type="subcellular location">
    <subcellularLocation>
        <location evidence="2">Mitochondrion inner membrane</location>
        <topology evidence="2">Multi-pass membrane protein</topology>
    </subcellularLocation>
</comment>
<comment type="miscellaneous">
    <text evidence="1">Heme 1 (or BL or b562) is low-potential and absorbs at about 562 nm, and heme 2 (or BH or b566) is high-potential and absorbs at about 566 nm.</text>
</comment>
<comment type="similarity">
    <text evidence="3 4">Belongs to the cytochrome b family.</text>
</comment>
<comment type="caution">
    <text evidence="2">The full-length protein contains only eight transmembrane helices, not nine as predicted by bioinformatics tools.</text>
</comment>
<name>CYB_ACIJB</name>
<proteinExistence type="inferred from homology"/>
<protein>
    <recommendedName>
        <fullName>Cytochrome b</fullName>
    </recommendedName>
    <alternativeName>
        <fullName>Complex III subunit 3</fullName>
    </alternativeName>
    <alternativeName>
        <fullName>Complex III subunit III</fullName>
    </alternativeName>
    <alternativeName>
        <fullName>Cytochrome b-c1 complex subunit 3</fullName>
    </alternativeName>
    <alternativeName>
        <fullName>Ubiquinol-cytochrome-c reductase complex cytochrome b subunit</fullName>
    </alternativeName>
</protein>
<sequence>MTNIRKSHPLIKIVNHSFIDLPTPPNISAWWNFGSLLGVCLVLQILTGLFLAMHYTSDTMTAFSSVTHICRDVNYGWIIRYMHANGASMFFICLYMHVGRGMYYGSYTFSETWNIGIMLLLTVMATAFMGYVLPWGQMSFWGATVITNLLSAIPYIGTNLVEWIWGGFSVDKATLTRFFAFHFILPFIISALAAVHLLFLHETGSNNPSGITSDSDKIPFHPYYMIKDILGLLMLILMLTLLVLFSPDLLGDPDNYIPANPLNTPPHIKPEWYFLFAYAILRSIPNKLGGVLALMFSILILAIIPIFHTSKQRGMMFRPLSQCLFWLLVADLLTLTWIGGQPVEHPFITIGQLASILYFSTLLVLMPISGIIENRLLKW</sequence>
<keyword id="KW-0249">Electron transport</keyword>
<keyword id="KW-0349">Heme</keyword>
<keyword id="KW-0408">Iron</keyword>
<keyword id="KW-0472">Membrane</keyword>
<keyword id="KW-0479">Metal-binding</keyword>
<keyword id="KW-0496">Mitochondrion</keyword>
<keyword id="KW-0999">Mitochondrion inner membrane</keyword>
<keyword id="KW-1185">Reference proteome</keyword>
<keyword id="KW-0679">Respiratory chain</keyword>
<keyword id="KW-0812">Transmembrane</keyword>
<keyword id="KW-1133">Transmembrane helix</keyword>
<keyword id="KW-0813">Transport</keyword>
<keyword id="KW-0830">Ubiquinone</keyword>
<organism>
    <name type="scientific">Acinonyx jubatus</name>
    <name type="common">Cheetah</name>
    <dbReference type="NCBI Taxonomy" id="32536"/>
    <lineage>
        <taxon>Eukaryota</taxon>
        <taxon>Metazoa</taxon>
        <taxon>Chordata</taxon>
        <taxon>Craniata</taxon>
        <taxon>Vertebrata</taxon>
        <taxon>Euteleostomi</taxon>
        <taxon>Mammalia</taxon>
        <taxon>Eutheria</taxon>
        <taxon>Laurasiatheria</taxon>
        <taxon>Carnivora</taxon>
        <taxon>Feliformia</taxon>
        <taxon>Felidae</taxon>
        <taxon>Felinae</taxon>
        <taxon>Acinonyx</taxon>
    </lineage>
</organism>
<feature type="chain" id="PRO_0000060523" description="Cytochrome b">
    <location>
        <begin position="1"/>
        <end position="379"/>
    </location>
</feature>
<feature type="transmembrane region" description="Helical" evidence="2">
    <location>
        <begin position="33"/>
        <end position="53"/>
    </location>
</feature>
<feature type="transmembrane region" description="Helical" evidence="2">
    <location>
        <begin position="77"/>
        <end position="98"/>
    </location>
</feature>
<feature type="transmembrane region" description="Helical" evidence="2">
    <location>
        <begin position="113"/>
        <end position="133"/>
    </location>
</feature>
<feature type="transmembrane region" description="Helical" evidence="2">
    <location>
        <begin position="178"/>
        <end position="198"/>
    </location>
</feature>
<feature type="transmembrane region" description="Helical" evidence="2">
    <location>
        <begin position="226"/>
        <end position="246"/>
    </location>
</feature>
<feature type="transmembrane region" description="Helical" evidence="2">
    <location>
        <begin position="288"/>
        <end position="308"/>
    </location>
</feature>
<feature type="transmembrane region" description="Helical" evidence="2">
    <location>
        <begin position="320"/>
        <end position="340"/>
    </location>
</feature>
<feature type="transmembrane region" description="Helical" evidence="2">
    <location>
        <begin position="347"/>
        <end position="367"/>
    </location>
</feature>
<feature type="binding site" description="axial binding residue" evidence="2">
    <location>
        <position position="83"/>
    </location>
    <ligand>
        <name>heme b</name>
        <dbReference type="ChEBI" id="CHEBI:60344"/>
        <label>b562</label>
    </ligand>
    <ligandPart>
        <name>Fe</name>
        <dbReference type="ChEBI" id="CHEBI:18248"/>
    </ligandPart>
</feature>
<feature type="binding site" description="axial binding residue" evidence="2">
    <location>
        <position position="97"/>
    </location>
    <ligand>
        <name>heme b</name>
        <dbReference type="ChEBI" id="CHEBI:60344"/>
        <label>b566</label>
    </ligand>
    <ligandPart>
        <name>Fe</name>
        <dbReference type="ChEBI" id="CHEBI:18248"/>
    </ligandPart>
</feature>
<feature type="binding site" description="axial binding residue" evidence="2">
    <location>
        <position position="182"/>
    </location>
    <ligand>
        <name>heme b</name>
        <dbReference type="ChEBI" id="CHEBI:60344"/>
        <label>b562</label>
    </ligand>
    <ligandPart>
        <name>Fe</name>
        <dbReference type="ChEBI" id="CHEBI:18248"/>
    </ligandPart>
</feature>
<feature type="binding site" description="axial binding residue" evidence="2">
    <location>
        <position position="196"/>
    </location>
    <ligand>
        <name>heme b</name>
        <dbReference type="ChEBI" id="CHEBI:60344"/>
        <label>b566</label>
    </ligand>
    <ligandPart>
        <name>Fe</name>
        <dbReference type="ChEBI" id="CHEBI:18248"/>
    </ligandPart>
</feature>
<feature type="binding site" evidence="2">
    <location>
        <position position="201"/>
    </location>
    <ligand>
        <name>a ubiquinone</name>
        <dbReference type="ChEBI" id="CHEBI:16389"/>
    </ligand>
</feature>
<accession>Q71RU1</accession>
<dbReference type="EMBL" id="AF344830">
    <property type="protein sequence ID" value="AAQ14964.1"/>
    <property type="molecule type" value="Genomic_DNA"/>
</dbReference>
<dbReference type="EMBL" id="AY463959">
    <property type="protein sequence ID" value="AAR19079.1"/>
    <property type="molecule type" value="Genomic_DNA"/>
</dbReference>
<dbReference type="RefSeq" id="NP_941390.1">
    <property type="nucleotide sequence ID" value="NC_005212.1"/>
</dbReference>
<dbReference type="SMR" id="Q71RU1"/>
<dbReference type="GeneID" id="2654014"/>
<dbReference type="KEGG" id="aju:2654014"/>
<dbReference type="CTD" id="4519"/>
<dbReference type="Proteomes" id="UP000504626">
    <property type="component" value="Mitochondrion MT"/>
</dbReference>
<dbReference type="GO" id="GO:0005743">
    <property type="term" value="C:mitochondrial inner membrane"/>
    <property type="evidence" value="ECO:0007669"/>
    <property type="project" value="UniProtKB-SubCell"/>
</dbReference>
<dbReference type="GO" id="GO:0045275">
    <property type="term" value="C:respiratory chain complex III"/>
    <property type="evidence" value="ECO:0007669"/>
    <property type="project" value="InterPro"/>
</dbReference>
<dbReference type="GO" id="GO:0046872">
    <property type="term" value="F:metal ion binding"/>
    <property type="evidence" value="ECO:0007669"/>
    <property type="project" value="UniProtKB-KW"/>
</dbReference>
<dbReference type="GO" id="GO:0008121">
    <property type="term" value="F:ubiquinol-cytochrome-c reductase activity"/>
    <property type="evidence" value="ECO:0007669"/>
    <property type="project" value="InterPro"/>
</dbReference>
<dbReference type="GO" id="GO:0006122">
    <property type="term" value="P:mitochondrial electron transport, ubiquinol to cytochrome c"/>
    <property type="evidence" value="ECO:0007669"/>
    <property type="project" value="TreeGrafter"/>
</dbReference>
<dbReference type="CDD" id="cd00290">
    <property type="entry name" value="cytochrome_b_C"/>
    <property type="match status" value="1"/>
</dbReference>
<dbReference type="CDD" id="cd00284">
    <property type="entry name" value="Cytochrome_b_N"/>
    <property type="match status" value="1"/>
</dbReference>
<dbReference type="FunFam" id="1.20.810.10:FF:000002">
    <property type="entry name" value="Cytochrome b"/>
    <property type="match status" value="1"/>
</dbReference>
<dbReference type="Gene3D" id="1.20.810.10">
    <property type="entry name" value="Cytochrome Bc1 Complex, Chain C"/>
    <property type="match status" value="1"/>
</dbReference>
<dbReference type="InterPro" id="IPR005798">
    <property type="entry name" value="Cyt_b/b6_C"/>
</dbReference>
<dbReference type="InterPro" id="IPR036150">
    <property type="entry name" value="Cyt_b/b6_C_sf"/>
</dbReference>
<dbReference type="InterPro" id="IPR005797">
    <property type="entry name" value="Cyt_b/b6_N"/>
</dbReference>
<dbReference type="InterPro" id="IPR027387">
    <property type="entry name" value="Cytb/b6-like_sf"/>
</dbReference>
<dbReference type="InterPro" id="IPR030689">
    <property type="entry name" value="Cytochrome_b"/>
</dbReference>
<dbReference type="InterPro" id="IPR048260">
    <property type="entry name" value="Cytochrome_b_C_euk/bac"/>
</dbReference>
<dbReference type="InterPro" id="IPR048259">
    <property type="entry name" value="Cytochrome_b_N_euk/bac"/>
</dbReference>
<dbReference type="InterPro" id="IPR016174">
    <property type="entry name" value="Di-haem_cyt_TM"/>
</dbReference>
<dbReference type="PANTHER" id="PTHR19271">
    <property type="entry name" value="CYTOCHROME B"/>
    <property type="match status" value="1"/>
</dbReference>
<dbReference type="PANTHER" id="PTHR19271:SF16">
    <property type="entry name" value="CYTOCHROME B"/>
    <property type="match status" value="1"/>
</dbReference>
<dbReference type="Pfam" id="PF00032">
    <property type="entry name" value="Cytochrom_B_C"/>
    <property type="match status" value="1"/>
</dbReference>
<dbReference type="Pfam" id="PF00033">
    <property type="entry name" value="Cytochrome_B"/>
    <property type="match status" value="1"/>
</dbReference>
<dbReference type="PIRSF" id="PIRSF038885">
    <property type="entry name" value="COB"/>
    <property type="match status" value="1"/>
</dbReference>
<dbReference type="SUPFAM" id="SSF81648">
    <property type="entry name" value="a domain/subunit of cytochrome bc1 complex (Ubiquinol-cytochrome c reductase)"/>
    <property type="match status" value="1"/>
</dbReference>
<dbReference type="SUPFAM" id="SSF81342">
    <property type="entry name" value="Transmembrane di-heme cytochromes"/>
    <property type="match status" value="1"/>
</dbReference>
<dbReference type="PROSITE" id="PS51003">
    <property type="entry name" value="CYTB_CTER"/>
    <property type="match status" value="1"/>
</dbReference>
<dbReference type="PROSITE" id="PS51002">
    <property type="entry name" value="CYTB_NTER"/>
    <property type="match status" value="1"/>
</dbReference>
<geneLocation type="mitochondrion"/>